<gene>
    <name evidence="1" type="primary">atpF</name>
    <name type="ordered locus">PMI3060</name>
</gene>
<keyword id="KW-0066">ATP synthesis</keyword>
<keyword id="KW-0997">Cell inner membrane</keyword>
<keyword id="KW-1003">Cell membrane</keyword>
<keyword id="KW-0138">CF(0)</keyword>
<keyword id="KW-0375">Hydrogen ion transport</keyword>
<keyword id="KW-0406">Ion transport</keyword>
<keyword id="KW-0472">Membrane</keyword>
<keyword id="KW-1185">Reference proteome</keyword>
<keyword id="KW-0812">Transmembrane</keyword>
<keyword id="KW-1133">Transmembrane helix</keyword>
<keyword id="KW-0813">Transport</keyword>
<dbReference type="EMBL" id="AM942759">
    <property type="protein sequence ID" value="CAR46014.1"/>
    <property type="molecule type" value="Genomic_DNA"/>
</dbReference>
<dbReference type="RefSeq" id="WP_004246595.1">
    <property type="nucleotide sequence ID" value="NC_010554.1"/>
</dbReference>
<dbReference type="SMR" id="B4F0E3"/>
<dbReference type="EnsemblBacteria" id="CAR46014">
    <property type="protein sequence ID" value="CAR46014"/>
    <property type="gene ID" value="PMI3060"/>
</dbReference>
<dbReference type="GeneID" id="6800204"/>
<dbReference type="KEGG" id="pmr:PMI3060"/>
<dbReference type="eggNOG" id="COG0711">
    <property type="taxonomic scope" value="Bacteria"/>
</dbReference>
<dbReference type="HOGENOM" id="CLU_079215_4_5_6"/>
<dbReference type="Proteomes" id="UP000008319">
    <property type="component" value="Chromosome"/>
</dbReference>
<dbReference type="GO" id="GO:0005886">
    <property type="term" value="C:plasma membrane"/>
    <property type="evidence" value="ECO:0007669"/>
    <property type="project" value="UniProtKB-SubCell"/>
</dbReference>
<dbReference type="GO" id="GO:0045259">
    <property type="term" value="C:proton-transporting ATP synthase complex"/>
    <property type="evidence" value="ECO:0007669"/>
    <property type="project" value="UniProtKB-KW"/>
</dbReference>
<dbReference type="GO" id="GO:0046933">
    <property type="term" value="F:proton-transporting ATP synthase activity, rotational mechanism"/>
    <property type="evidence" value="ECO:0007669"/>
    <property type="project" value="UniProtKB-UniRule"/>
</dbReference>
<dbReference type="GO" id="GO:0046961">
    <property type="term" value="F:proton-transporting ATPase activity, rotational mechanism"/>
    <property type="evidence" value="ECO:0007669"/>
    <property type="project" value="TreeGrafter"/>
</dbReference>
<dbReference type="CDD" id="cd06503">
    <property type="entry name" value="ATP-synt_Fo_b"/>
    <property type="match status" value="1"/>
</dbReference>
<dbReference type="FunFam" id="1.20.5.620:FF:000001">
    <property type="entry name" value="ATP synthase subunit b"/>
    <property type="match status" value="1"/>
</dbReference>
<dbReference type="Gene3D" id="1.20.5.620">
    <property type="entry name" value="F1F0 ATP synthase subunit B, membrane domain"/>
    <property type="match status" value="1"/>
</dbReference>
<dbReference type="HAMAP" id="MF_01398">
    <property type="entry name" value="ATP_synth_b_bprime"/>
    <property type="match status" value="1"/>
</dbReference>
<dbReference type="InterPro" id="IPR028987">
    <property type="entry name" value="ATP_synth_B-like_membr_sf"/>
</dbReference>
<dbReference type="InterPro" id="IPR002146">
    <property type="entry name" value="ATP_synth_b/b'su_bac/chlpt"/>
</dbReference>
<dbReference type="InterPro" id="IPR005864">
    <property type="entry name" value="ATP_synth_F0_bsu_bac"/>
</dbReference>
<dbReference type="InterPro" id="IPR050059">
    <property type="entry name" value="ATP_synthase_B_chain"/>
</dbReference>
<dbReference type="NCBIfam" id="TIGR01144">
    <property type="entry name" value="ATP_synt_b"/>
    <property type="match status" value="1"/>
</dbReference>
<dbReference type="NCBIfam" id="NF004411">
    <property type="entry name" value="PRK05759.1-2"/>
    <property type="match status" value="1"/>
</dbReference>
<dbReference type="NCBIfam" id="NF004413">
    <property type="entry name" value="PRK05759.1-4"/>
    <property type="match status" value="1"/>
</dbReference>
<dbReference type="PANTHER" id="PTHR33445:SF1">
    <property type="entry name" value="ATP SYNTHASE SUBUNIT B"/>
    <property type="match status" value="1"/>
</dbReference>
<dbReference type="PANTHER" id="PTHR33445">
    <property type="entry name" value="ATP SYNTHASE SUBUNIT B', CHLOROPLASTIC"/>
    <property type="match status" value="1"/>
</dbReference>
<dbReference type="Pfam" id="PF00430">
    <property type="entry name" value="ATP-synt_B"/>
    <property type="match status" value="1"/>
</dbReference>
<dbReference type="SUPFAM" id="SSF81573">
    <property type="entry name" value="F1F0 ATP synthase subunit B, membrane domain"/>
    <property type="match status" value="1"/>
</dbReference>
<proteinExistence type="inferred from homology"/>
<name>ATPF_PROMH</name>
<sequence>MNLNATILGQAIAFVLFVLFCMKYVWPPIMAAIEKRQKEIADGLSSAERAKKDLDLAKADAGEQLAKAKAEAQAIIESANKQRTQMIEEAKAEAEQERSKIVAQAQSELEAERKRAREELRKQVAMLAIAGAEKIIERSVDEAANSDIVDKLVAEL</sequence>
<feature type="chain" id="PRO_0000368678" description="ATP synthase subunit b">
    <location>
        <begin position="1"/>
        <end position="156"/>
    </location>
</feature>
<feature type="transmembrane region" description="Helical" evidence="1">
    <location>
        <begin position="11"/>
        <end position="31"/>
    </location>
</feature>
<reference key="1">
    <citation type="journal article" date="2008" name="J. Bacteriol.">
        <title>Complete genome sequence of uropathogenic Proteus mirabilis, a master of both adherence and motility.</title>
        <authorList>
            <person name="Pearson M.M."/>
            <person name="Sebaihia M."/>
            <person name="Churcher C."/>
            <person name="Quail M.A."/>
            <person name="Seshasayee A.S."/>
            <person name="Luscombe N.M."/>
            <person name="Abdellah Z."/>
            <person name="Arrosmith C."/>
            <person name="Atkin B."/>
            <person name="Chillingworth T."/>
            <person name="Hauser H."/>
            <person name="Jagels K."/>
            <person name="Moule S."/>
            <person name="Mungall K."/>
            <person name="Norbertczak H."/>
            <person name="Rabbinowitsch E."/>
            <person name="Walker D."/>
            <person name="Whithead S."/>
            <person name="Thomson N.R."/>
            <person name="Rather P.N."/>
            <person name="Parkhill J."/>
            <person name="Mobley H.L.T."/>
        </authorList>
    </citation>
    <scope>NUCLEOTIDE SEQUENCE [LARGE SCALE GENOMIC DNA]</scope>
    <source>
        <strain>HI4320</strain>
    </source>
</reference>
<comment type="function">
    <text evidence="1">F(1)F(0) ATP synthase produces ATP from ADP in the presence of a proton or sodium gradient. F-type ATPases consist of two structural domains, F(1) containing the extramembraneous catalytic core and F(0) containing the membrane proton channel, linked together by a central stalk and a peripheral stalk. During catalysis, ATP synthesis in the catalytic domain of F(1) is coupled via a rotary mechanism of the central stalk subunits to proton translocation.</text>
</comment>
<comment type="function">
    <text evidence="1">Component of the F(0) channel, it forms part of the peripheral stalk, linking F(1) to F(0).</text>
</comment>
<comment type="subunit">
    <text evidence="1">F-type ATPases have 2 components, F(1) - the catalytic core - and F(0) - the membrane proton channel. F(1) has five subunits: alpha(3), beta(3), gamma(1), delta(1), epsilon(1). F(0) has three main subunits: a(1), b(2) and c(10-14). The alpha and beta chains form an alternating ring which encloses part of the gamma chain. F(1) is attached to F(0) by a central stalk formed by the gamma and epsilon chains, while a peripheral stalk is formed by the delta and b chains.</text>
</comment>
<comment type="subcellular location">
    <subcellularLocation>
        <location evidence="1">Cell inner membrane</location>
        <topology evidence="1">Single-pass membrane protein</topology>
    </subcellularLocation>
</comment>
<comment type="similarity">
    <text evidence="1">Belongs to the ATPase B chain family.</text>
</comment>
<organism>
    <name type="scientific">Proteus mirabilis (strain HI4320)</name>
    <dbReference type="NCBI Taxonomy" id="529507"/>
    <lineage>
        <taxon>Bacteria</taxon>
        <taxon>Pseudomonadati</taxon>
        <taxon>Pseudomonadota</taxon>
        <taxon>Gammaproteobacteria</taxon>
        <taxon>Enterobacterales</taxon>
        <taxon>Morganellaceae</taxon>
        <taxon>Proteus</taxon>
    </lineage>
</organism>
<evidence type="ECO:0000255" key="1">
    <source>
        <dbReference type="HAMAP-Rule" id="MF_01398"/>
    </source>
</evidence>
<accession>B4F0E3</accession>
<protein>
    <recommendedName>
        <fullName evidence="1">ATP synthase subunit b</fullName>
    </recommendedName>
    <alternativeName>
        <fullName evidence="1">ATP synthase F(0) sector subunit b</fullName>
    </alternativeName>
    <alternativeName>
        <fullName evidence="1">ATPase subunit I</fullName>
    </alternativeName>
    <alternativeName>
        <fullName evidence="1">F-type ATPase subunit b</fullName>
        <shortName evidence="1">F-ATPase subunit b</shortName>
    </alternativeName>
</protein>